<dbReference type="EC" id="7.1.1.9"/>
<dbReference type="EMBL" id="M68929">
    <property type="protein sequence ID" value="AAC09434.1"/>
    <property type="molecule type" value="Genomic_DNA"/>
</dbReference>
<dbReference type="PIR" id="S25951">
    <property type="entry name" value="S25951"/>
</dbReference>
<dbReference type="RefSeq" id="NP_054437.1">
    <property type="nucleotide sequence ID" value="NC_001660.1"/>
</dbReference>
<dbReference type="SMR" id="P26858"/>
<dbReference type="GeneID" id="2702480"/>
<dbReference type="GO" id="GO:0005743">
    <property type="term" value="C:mitochondrial inner membrane"/>
    <property type="evidence" value="ECO:0007669"/>
    <property type="project" value="UniProtKB-SubCell"/>
</dbReference>
<dbReference type="GO" id="GO:0004129">
    <property type="term" value="F:cytochrome-c oxidase activity"/>
    <property type="evidence" value="ECO:0007669"/>
    <property type="project" value="UniProtKB-EC"/>
</dbReference>
<dbReference type="GO" id="GO:0019646">
    <property type="term" value="P:aerobic electron transport chain"/>
    <property type="evidence" value="ECO:0007669"/>
    <property type="project" value="InterPro"/>
</dbReference>
<dbReference type="CDD" id="cd01665">
    <property type="entry name" value="Cyt_c_Oxidase_III"/>
    <property type="match status" value="1"/>
</dbReference>
<dbReference type="FunFam" id="1.10.287.70:FF:000075">
    <property type="entry name" value="Cytochrome c oxidase subunit 3"/>
    <property type="match status" value="1"/>
</dbReference>
<dbReference type="FunFam" id="1.20.120.80:FF:000002">
    <property type="entry name" value="Cytochrome c oxidase subunit 3"/>
    <property type="match status" value="1"/>
</dbReference>
<dbReference type="Gene3D" id="1.10.287.70">
    <property type="match status" value="1"/>
</dbReference>
<dbReference type="Gene3D" id="1.20.120.80">
    <property type="entry name" value="Cytochrome c oxidase, subunit III, four-helix bundle"/>
    <property type="match status" value="1"/>
</dbReference>
<dbReference type="InterPro" id="IPR024791">
    <property type="entry name" value="Cyt_c/ubiquinol_Oxase_su3"/>
</dbReference>
<dbReference type="InterPro" id="IPR033945">
    <property type="entry name" value="Cyt_c_oxase_su3_dom"/>
</dbReference>
<dbReference type="InterPro" id="IPR000298">
    <property type="entry name" value="Cyt_c_oxidase-like_su3"/>
</dbReference>
<dbReference type="InterPro" id="IPR035973">
    <property type="entry name" value="Cyt_c_oxidase_su3-like_sf"/>
</dbReference>
<dbReference type="InterPro" id="IPR013833">
    <property type="entry name" value="Cyt_c_oxidase_su3_a-hlx"/>
</dbReference>
<dbReference type="PANTHER" id="PTHR11403:SF7">
    <property type="entry name" value="CYTOCHROME C OXIDASE SUBUNIT 3"/>
    <property type="match status" value="1"/>
</dbReference>
<dbReference type="PANTHER" id="PTHR11403">
    <property type="entry name" value="CYTOCHROME C OXIDASE SUBUNIT III"/>
    <property type="match status" value="1"/>
</dbReference>
<dbReference type="Pfam" id="PF00510">
    <property type="entry name" value="COX3"/>
    <property type="match status" value="1"/>
</dbReference>
<dbReference type="SUPFAM" id="SSF81452">
    <property type="entry name" value="Cytochrome c oxidase subunit III-like"/>
    <property type="match status" value="1"/>
</dbReference>
<dbReference type="PROSITE" id="PS50253">
    <property type="entry name" value="COX3"/>
    <property type="match status" value="1"/>
</dbReference>
<gene>
    <name type="primary">COX3</name>
    <name type="synonym">COXIII</name>
</gene>
<proteinExistence type="inferred from homology"/>
<geneLocation type="mitochondrion"/>
<sequence length="265" mass="29595">MSVSQKHPFHLVDPSPWPLLGSLGALASTIGGVMYMHSFTGGGTLLCLGLGMILYTMFVWWRDVIRESTYEGHHTFVVQLGLRYGIILFIVSEVMFFLAFFWAFFHSSLAPTVEIGAIWPPKGISVLDPWGIPFLNTLILLSSGAAVTWAHHAILAGLKQQAVYALIATVFLALVFTGFQGIEYIEAPFTISDGIYGSTFFLATGFHGFHVIIGTIFLIICGIRQYLGHFTPKHHFGFEAAAFYWHFVDVVWLFLFVSIYWWGGN</sequence>
<name>COX3_MARPO</name>
<comment type="function">
    <text evidence="1">Component of the cytochrome c oxidase, the last enzyme in the mitochondrial electron transport chain which drives oxidative phosphorylation. The respiratory chain contains 3 multisubunit complexes succinate dehydrogenase (complex II, CII), ubiquinol-cytochrome c oxidoreductase (cytochrome b-c1 complex, complex III, CIII) and cytochrome c oxidase (complex IV, CIV), that cooperate to transfer electrons derived from NADH and succinate to molecular oxygen, creating an electrochemical gradient over the inner membrane that drives transmembrane transport and the ATP synthase. Cytochrome c oxidase is the component of the respiratory chain that catalyzes the reduction of oxygen to water. Electrons originating from reduced cytochrome c in the intermembrane space (IMS) are transferred via the dinuclear copper A center (CU(A)) of subunit 2 and heme A of subunit 1 to the active site in subunit 1, a binuclear center (BNC) formed by heme A3 and copper B (CU(B)). The BNC reduces molecular oxygen to 2 water molecules using 4 electrons from cytochrome c in the IMS and 4 protons from the mitochondrial matrix.</text>
</comment>
<comment type="catalytic activity">
    <reaction evidence="1">
        <text>4 Fe(II)-[cytochrome c] + O2 + 8 H(+)(in) = 4 Fe(III)-[cytochrome c] + 2 H2O + 4 H(+)(out)</text>
        <dbReference type="Rhea" id="RHEA:11436"/>
        <dbReference type="Rhea" id="RHEA-COMP:10350"/>
        <dbReference type="Rhea" id="RHEA-COMP:14399"/>
        <dbReference type="ChEBI" id="CHEBI:15377"/>
        <dbReference type="ChEBI" id="CHEBI:15378"/>
        <dbReference type="ChEBI" id="CHEBI:15379"/>
        <dbReference type="ChEBI" id="CHEBI:29033"/>
        <dbReference type="ChEBI" id="CHEBI:29034"/>
        <dbReference type="EC" id="7.1.1.9"/>
    </reaction>
    <physiologicalReaction direction="left-to-right" evidence="1">
        <dbReference type="Rhea" id="RHEA:11437"/>
    </physiologicalReaction>
</comment>
<comment type="subunit">
    <text evidence="1">Component of the cytochrome c oxidase (complex IV, CIV), a multisubunit enzyme composed of a catalytic core of 3 subunits and several supernumerary subunits. The complex exists as a monomer or a dimer and forms supercomplexes (SCs) in the inner mitochondrial membrane with ubiquinol-cytochrome c oxidoreductase (cytochrome b-c1 complex, complex III, CIII).</text>
</comment>
<comment type="subcellular location">
    <subcellularLocation>
        <location evidence="1">Mitochondrion inner membrane</location>
        <topology evidence="1">Multi-pass membrane protein</topology>
    </subcellularLocation>
</comment>
<comment type="similarity">
    <text evidence="3">Belongs to the cytochrome c oxidase subunit 3 family.</text>
</comment>
<evidence type="ECO:0000250" key="1">
    <source>
        <dbReference type="UniProtKB" id="P00420"/>
    </source>
</evidence>
<evidence type="ECO:0000255" key="2"/>
<evidence type="ECO:0000305" key="3"/>
<protein>
    <recommendedName>
        <fullName>Cytochrome c oxidase subunit 3</fullName>
        <ecNumber>7.1.1.9</ecNumber>
    </recommendedName>
    <alternativeName>
        <fullName>Cytochrome c oxidase polypeptide III</fullName>
    </alternativeName>
</protein>
<accession>P26858</accession>
<feature type="chain" id="PRO_0000183807" description="Cytochrome c oxidase subunit 3">
    <location>
        <begin position="1"/>
        <end position="265"/>
    </location>
</feature>
<feature type="transmembrane region" description="Helical" evidence="2">
    <location>
        <begin position="16"/>
        <end position="36"/>
    </location>
</feature>
<feature type="transmembrane region" description="Helical" evidence="2">
    <location>
        <begin position="41"/>
        <end position="61"/>
    </location>
</feature>
<feature type="transmembrane region" description="Helical" evidence="2">
    <location>
        <begin position="85"/>
        <end position="105"/>
    </location>
</feature>
<feature type="transmembrane region" description="Helical" evidence="2">
    <location>
        <begin position="138"/>
        <end position="158"/>
    </location>
</feature>
<feature type="transmembrane region" description="Helical" evidence="2">
    <location>
        <begin position="162"/>
        <end position="182"/>
    </location>
</feature>
<feature type="transmembrane region" description="Helical" evidence="2">
    <location>
        <begin position="200"/>
        <end position="220"/>
    </location>
</feature>
<feature type="transmembrane region" description="Helical" evidence="2">
    <location>
        <begin position="242"/>
        <end position="262"/>
    </location>
</feature>
<reference key="1">
    <citation type="journal article" date="1992" name="J. Mol. Biol.">
        <title>Gene organization deduced from the complete sequence of liverwort Marchantia polymorpha mitochondrial DNA. A primitive form of plant mitochondrial genome.</title>
        <authorList>
            <person name="Oda K."/>
            <person name="Yamato K."/>
            <person name="Ohta E."/>
            <person name="Nakamura Y."/>
            <person name="Takemura M."/>
            <person name="Nozato N."/>
            <person name="Akashi K."/>
            <person name="Kanegae T."/>
            <person name="Ogura Y."/>
            <person name="Kohchi T."/>
            <person name="Ohyama K."/>
        </authorList>
    </citation>
    <scope>NUCLEOTIDE SEQUENCE [GENOMIC DNA]</scope>
</reference>
<organism>
    <name type="scientific">Marchantia polymorpha</name>
    <name type="common">Common liverwort</name>
    <name type="synonym">Marchantia aquatica</name>
    <dbReference type="NCBI Taxonomy" id="3197"/>
    <lineage>
        <taxon>Eukaryota</taxon>
        <taxon>Viridiplantae</taxon>
        <taxon>Streptophyta</taxon>
        <taxon>Embryophyta</taxon>
        <taxon>Marchantiophyta</taxon>
        <taxon>Marchantiopsida</taxon>
        <taxon>Marchantiidae</taxon>
        <taxon>Marchantiales</taxon>
        <taxon>Marchantiaceae</taxon>
        <taxon>Marchantia</taxon>
    </lineage>
</organism>
<keyword id="KW-0472">Membrane</keyword>
<keyword id="KW-0496">Mitochondrion</keyword>
<keyword id="KW-0999">Mitochondrion inner membrane</keyword>
<keyword id="KW-1278">Translocase</keyword>
<keyword id="KW-0812">Transmembrane</keyword>
<keyword id="KW-1133">Transmembrane helix</keyword>